<keyword id="KW-0378">Hydrolase</keyword>
<keyword id="KW-0460">Magnesium</keyword>
<keyword id="KW-0479">Metal-binding</keyword>
<keyword id="KW-1185">Reference proteome</keyword>
<feature type="chain" id="PRO_0000342982" description="HMP-PP phosphatase">
    <location>
        <begin position="1"/>
        <end position="272"/>
    </location>
</feature>
<feature type="active site" description="Nucleophile" evidence="1">
    <location>
        <position position="8"/>
    </location>
</feature>
<feature type="binding site" evidence="1">
    <location>
        <position position="8"/>
    </location>
    <ligand>
        <name>Mg(2+)</name>
        <dbReference type="ChEBI" id="CHEBI:18420"/>
    </ligand>
</feature>
<feature type="binding site" evidence="1">
    <location>
        <position position="10"/>
    </location>
    <ligand>
        <name>Mg(2+)</name>
        <dbReference type="ChEBI" id="CHEBI:18420"/>
    </ligand>
</feature>
<feature type="binding site" evidence="1">
    <location>
        <position position="212"/>
    </location>
    <ligand>
        <name>Mg(2+)</name>
        <dbReference type="ChEBI" id="CHEBI:18420"/>
    </ligand>
</feature>
<sequence>MARLAAFDMDGTLLMPDHHLGEKTLSTLARLRERDITLTFATGRHALEMQHILGAISLDAYLITGNGTRVHSLEGELLHRDDLPADVAELVLYQQWDTRASMHIFNDDGWFTGKEIPALLQAFVYSGFRYQIIDVKKMPLGSVTKICFCGDHDDLTRLQIQLHEALGERAHLCFSATDCLEVLPVGCNKGAALTVLTQHLGLSLRDCMAFGDAMNDREMLGSVGSGFIMGNAMPQLRAELPHLPVIGHCRNQAVSHYLTHWLDYPHLPYSPE</sequence>
<gene>
    <name evidence="1" type="primary">cof</name>
    <name type="ordered locus">Z0553</name>
    <name type="ordered locus">ECs0500</name>
</gene>
<reference key="1">
    <citation type="journal article" date="2001" name="Nature">
        <title>Genome sequence of enterohaemorrhagic Escherichia coli O157:H7.</title>
        <authorList>
            <person name="Perna N.T."/>
            <person name="Plunkett G. III"/>
            <person name="Burland V."/>
            <person name="Mau B."/>
            <person name="Glasner J.D."/>
            <person name="Rose D.J."/>
            <person name="Mayhew G.F."/>
            <person name="Evans P.S."/>
            <person name="Gregor J."/>
            <person name="Kirkpatrick H.A."/>
            <person name="Posfai G."/>
            <person name="Hackett J."/>
            <person name="Klink S."/>
            <person name="Boutin A."/>
            <person name="Shao Y."/>
            <person name="Miller L."/>
            <person name="Grotbeck E.J."/>
            <person name="Davis N.W."/>
            <person name="Lim A."/>
            <person name="Dimalanta E.T."/>
            <person name="Potamousis K."/>
            <person name="Apodaca J."/>
            <person name="Anantharaman T.S."/>
            <person name="Lin J."/>
            <person name="Yen G."/>
            <person name="Schwartz D.C."/>
            <person name="Welch R.A."/>
            <person name="Blattner F.R."/>
        </authorList>
    </citation>
    <scope>NUCLEOTIDE SEQUENCE [LARGE SCALE GENOMIC DNA]</scope>
    <source>
        <strain>O157:H7 / EDL933 / ATCC 700927 / EHEC</strain>
    </source>
</reference>
<reference key="2">
    <citation type="journal article" date="2001" name="DNA Res.">
        <title>Complete genome sequence of enterohemorrhagic Escherichia coli O157:H7 and genomic comparison with a laboratory strain K-12.</title>
        <authorList>
            <person name="Hayashi T."/>
            <person name="Makino K."/>
            <person name="Ohnishi M."/>
            <person name="Kurokawa K."/>
            <person name="Ishii K."/>
            <person name="Yokoyama K."/>
            <person name="Han C.-G."/>
            <person name="Ohtsubo E."/>
            <person name="Nakayama K."/>
            <person name="Murata T."/>
            <person name="Tanaka M."/>
            <person name="Tobe T."/>
            <person name="Iida T."/>
            <person name="Takami H."/>
            <person name="Honda T."/>
            <person name="Sasakawa C."/>
            <person name="Ogasawara N."/>
            <person name="Yasunaga T."/>
            <person name="Kuhara S."/>
            <person name="Shiba T."/>
            <person name="Hattori M."/>
            <person name="Shinagawa H."/>
        </authorList>
    </citation>
    <scope>NUCLEOTIDE SEQUENCE [LARGE SCALE GENOMIC DNA]</scope>
    <source>
        <strain>O157:H7 / Sakai / RIMD 0509952 / EHEC</strain>
    </source>
</reference>
<accession>Q8XE50</accession>
<accession>Q7AGZ5</accession>
<dbReference type="EC" id="3.6.1.-" evidence="1"/>
<dbReference type="EMBL" id="AE005174">
    <property type="protein sequence ID" value="AAG54796.1"/>
    <property type="status" value="ALT_INIT"/>
    <property type="molecule type" value="Genomic_DNA"/>
</dbReference>
<dbReference type="EMBL" id="BA000007">
    <property type="protein sequence ID" value="BAB33923.1"/>
    <property type="status" value="ALT_INIT"/>
    <property type="molecule type" value="Genomic_DNA"/>
</dbReference>
<dbReference type="PIR" id="D90691">
    <property type="entry name" value="D90691"/>
</dbReference>
<dbReference type="PIR" id="H85541">
    <property type="entry name" value="H85541"/>
</dbReference>
<dbReference type="RefSeq" id="NP_308527.1">
    <property type="nucleotide sequence ID" value="NC_002695.1"/>
</dbReference>
<dbReference type="RefSeq" id="WP_001301796.1">
    <property type="nucleotide sequence ID" value="NZ_VOAI01000005.1"/>
</dbReference>
<dbReference type="SMR" id="Q8XE50"/>
<dbReference type="STRING" id="155864.Z0553"/>
<dbReference type="GeneID" id="914602"/>
<dbReference type="KEGG" id="ece:Z0553"/>
<dbReference type="KEGG" id="ecs:ECs_0500"/>
<dbReference type="PATRIC" id="fig|386585.9.peg.603"/>
<dbReference type="eggNOG" id="COG0561">
    <property type="taxonomic scope" value="Bacteria"/>
</dbReference>
<dbReference type="HOGENOM" id="CLU_044146_5_2_6"/>
<dbReference type="OMA" id="CFSAMDC"/>
<dbReference type="Proteomes" id="UP000000558">
    <property type="component" value="Chromosome"/>
</dbReference>
<dbReference type="Proteomes" id="UP000002519">
    <property type="component" value="Chromosome"/>
</dbReference>
<dbReference type="GO" id="GO:0002145">
    <property type="term" value="F:4-amino-5-hydroxymethyl-2-methylpyrimidine diphosphatase activity"/>
    <property type="evidence" value="ECO:0007669"/>
    <property type="project" value="RHEA"/>
</dbReference>
<dbReference type="GO" id="GO:0000287">
    <property type="term" value="F:magnesium ion binding"/>
    <property type="evidence" value="ECO:0000250"/>
    <property type="project" value="UniProtKB"/>
</dbReference>
<dbReference type="GO" id="GO:0016791">
    <property type="term" value="F:phosphatase activity"/>
    <property type="evidence" value="ECO:0000250"/>
    <property type="project" value="UniProtKB"/>
</dbReference>
<dbReference type="CDD" id="cd07516">
    <property type="entry name" value="HAD_Pase"/>
    <property type="match status" value="1"/>
</dbReference>
<dbReference type="FunFam" id="3.30.1240.10:FF:000002">
    <property type="entry name" value="HMP-PP phosphatase"/>
    <property type="match status" value="1"/>
</dbReference>
<dbReference type="Gene3D" id="3.30.1240.10">
    <property type="match status" value="1"/>
</dbReference>
<dbReference type="Gene3D" id="3.40.50.1000">
    <property type="entry name" value="HAD superfamily/HAD-like"/>
    <property type="match status" value="1"/>
</dbReference>
<dbReference type="HAMAP" id="MF_01847">
    <property type="entry name" value="HMP_PP_phosphat"/>
    <property type="match status" value="1"/>
</dbReference>
<dbReference type="InterPro" id="IPR000150">
    <property type="entry name" value="Cof"/>
</dbReference>
<dbReference type="InterPro" id="IPR036412">
    <property type="entry name" value="HAD-like_sf"/>
</dbReference>
<dbReference type="InterPro" id="IPR006379">
    <property type="entry name" value="HAD-SF_hydro_IIB"/>
</dbReference>
<dbReference type="InterPro" id="IPR023214">
    <property type="entry name" value="HAD_sf"/>
</dbReference>
<dbReference type="InterPro" id="IPR023938">
    <property type="entry name" value="HMP-PP_phosphatase"/>
</dbReference>
<dbReference type="NCBIfam" id="TIGR00099">
    <property type="entry name" value="Cof-subfamily"/>
    <property type="match status" value="1"/>
</dbReference>
<dbReference type="NCBIfam" id="TIGR01484">
    <property type="entry name" value="HAD-SF-IIB"/>
    <property type="match status" value="1"/>
</dbReference>
<dbReference type="NCBIfam" id="NF011705">
    <property type="entry name" value="PRK15126.1"/>
    <property type="match status" value="1"/>
</dbReference>
<dbReference type="PANTHER" id="PTHR47267">
    <property type="match status" value="1"/>
</dbReference>
<dbReference type="PANTHER" id="PTHR47267:SF2">
    <property type="entry name" value="HMP-PP PHOSPHATASE"/>
    <property type="match status" value="1"/>
</dbReference>
<dbReference type="Pfam" id="PF08282">
    <property type="entry name" value="Hydrolase_3"/>
    <property type="match status" value="1"/>
</dbReference>
<dbReference type="SFLD" id="SFLDG01140">
    <property type="entry name" value="C2.B:_Phosphomannomutase_and_P"/>
    <property type="match status" value="1"/>
</dbReference>
<dbReference type="SFLD" id="SFLDS00003">
    <property type="entry name" value="Haloacid_Dehalogenase"/>
    <property type="match status" value="1"/>
</dbReference>
<dbReference type="SUPFAM" id="SSF56784">
    <property type="entry name" value="HAD-like"/>
    <property type="match status" value="1"/>
</dbReference>
<dbReference type="PROSITE" id="PS01228">
    <property type="entry name" value="COF_1"/>
    <property type="match status" value="1"/>
</dbReference>
<dbReference type="PROSITE" id="PS01229">
    <property type="entry name" value="COF_2"/>
    <property type="match status" value="1"/>
</dbReference>
<evidence type="ECO:0000255" key="1">
    <source>
        <dbReference type="HAMAP-Rule" id="MF_01847"/>
    </source>
</evidence>
<evidence type="ECO:0000305" key="2"/>
<proteinExistence type="inferred from homology"/>
<name>COF_ECO57</name>
<comment type="function">
    <text evidence="1">Catalyzes the hydrolysis of 4-amino-2-methyl-5-hydroxymethylpyrimidine pyrophosphate (HMP-PP) to 4-amino-2-methyl-5-hydroxymethylpyrimidine phosphate (HMP-P).</text>
</comment>
<comment type="catalytic activity">
    <reaction evidence="1">
        <text>4-amino-2-methyl-5-(diphosphooxymethyl)pyrimidine + H2O = 4-amino-2-methyl-5-(phosphooxymethyl)pyrimidine + phosphate + H(+)</text>
        <dbReference type="Rhea" id="RHEA:27914"/>
        <dbReference type="ChEBI" id="CHEBI:15377"/>
        <dbReference type="ChEBI" id="CHEBI:15378"/>
        <dbReference type="ChEBI" id="CHEBI:43474"/>
        <dbReference type="ChEBI" id="CHEBI:57841"/>
        <dbReference type="ChEBI" id="CHEBI:58354"/>
    </reaction>
</comment>
<comment type="cofactor">
    <cofactor evidence="1">
        <name>Mg(2+)</name>
        <dbReference type="ChEBI" id="CHEBI:18420"/>
    </cofactor>
</comment>
<comment type="similarity">
    <text evidence="1">Belongs to the HAD-like hydrolase superfamily. Cof family.</text>
</comment>
<comment type="sequence caution" evidence="2">
    <conflict type="erroneous initiation">
        <sequence resource="EMBL-CDS" id="AAG54796"/>
    </conflict>
    <text>Extended N-terminus.</text>
</comment>
<comment type="sequence caution" evidence="2">
    <conflict type="erroneous initiation">
        <sequence resource="EMBL-CDS" id="BAB33923"/>
    </conflict>
    <text>Extended N-terminus.</text>
</comment>
<protein>
    <recommendedName>
        <fullName evidence="1">HMP-PP phosphatase</fullName>
        <ecNumber evidence="1">3.6.1.-</ecNumber>
    </recommendedName>
</protein>
<organism>
    <name type="scientific">Escherichia coli O157:H7</name>
    <dbReference type="NCBI Taxonomy" id="83334"/>
    <lineage>
        <taxon>Bacteria</taxon>
        <taxon>Pseudomonadati</taxon>
        <taxon>Pseudomonadota</taxon>
        <taxon>Gammaproteobacteria</taxon>
        <taxon>Enterobacterales</taxon>
        <taxon>Enterobacteriaceae</taxon>
        <taxon>Escherichia</taxon>
    </lineage>
</organism>